<comment type="function">
    <text evidence="1">Specifically methylates the uridine in position 2552 of 23S rRNA at the 2'-O position of the ribose in the fully assembled 50S ribosomal subunit.</text>
</comment>
<comment type="catalytic activity">
    <reaction evidence="1">
        <text>uridine(2552) in 23S rRNA + S-adenosyl-L-methionine = 2'-O-methyluridine(2552) in 23S rRNA + S-adenosyl-L-homocysteine + H(+)</text>
        <dbReference type="Rhea" id="RHEA:42720"/>
        <dbReference type="Rhea" id="RHEA-COMP:10202"/>
        <dbReference type="Rhea" id="RHEA-COMP:10203"/>
        <dbReference type="ChEBI" id="CHEBI:15378"/>
        <dbReference type="ChEBI" id="CHEBI:57856"/>
        <dbReference type="ChEBI" id="CHEBI:59789"/>
        <dbReference type="ChEBI" id="CHEBI:65315"/>
        <dbReference type="ChEBI" id="CHEBI:74478"/>
        <dbReference type="EC" id="2.1.1.166"/>
    </reaction>
</comment>
<comment type="subcellular location">
    <subcellularLocation>
        <location evidence="1">Cytoplasm</location>
    </subcellularLocation>
</comment>
<comment type="similarity">
    <text evidence="1">Belongs to the class I-like SAM-binding methyltransferase superfamily. RNA methyltransferase RlmE family.</text>
</comment>
<organism>
    <name type="scientific">Rickettsia rickettsii (strain Sheila Smith)</name>
    <dbReference type="NCBI Taxonomy" id="392021"/>
    <lineage>
        <taxon>Bacteria</taxon>
        <taxon>Pseudomonadati</taxon>
        <taxon>Pseudomonadota</taxon>
        <taxon>Alphaproteobacteria</taxon>
        <taxon>Rickettsiales</taxon>
        <taxon>Rickettsiaceae</taxon>
        <taxon>Rickettsieae</taxon>
        <taxon>Rickettsia</taxon>
        <taxon>spotted fever group</taxon>
    </lineage>
</organism>
<reference key="1">
    <citation type="submission" date="2007-09" db="EMBL/GenBank/DDBJ databases">
        <title>Complete genome sequence of Rickettsia rickettsii.</title>
        <authorList>
            <person name="Madan A."/>
            <person name="Fahey J."/>
            <person name="Helton E."/>
            <person name="Ketteman M."/>
            <person name="Madan A."/>
            <person name="Rodrigues S."/>
            <person name="Sanchez A."/>
            <person name="Dasch G."/>
            <person name="Eremeeva M."/>
        </authorList>
    </citation>
    <scope>NUCLEOTIDE SEQUENCE [LARGE SCALE GENOMIC DNA]</scope>
    <source>
        <strain>Sheila Smith</strain>
    </source>
</reference>
<evidence type="ECO:0000255" key="1">
    <source>
        <dbReference type="HAMAP-Rule" id="MF_01547"/>
    </source>
</evidence>
<protein>
    <recommendedName>
        <fullName evidence="1">Ribosomal RNA large subunit methyltransferase E</fullName>
        <ecNumber evidence="1">2.1.1.166</ecNumber>
    </recommendedName>
    <alternativeName>
        <fullName evidence="1">23S rRNA Um2552 methyltransferase</fullName>
    </alternativeName>
    <alternativeName>
        <fullName evidence="1">rRNA (uridine-2'-O-)-methyltransferase</fullName>
    </alternativeName>
</protein>
<accession>A8GQZ0</accession>
<sequence>MTNNLSGYRNKFVRVKTSKKRTVSSSNWLRRQLNDPYVAKARIDGFRSRAAYKLLEIHEKFKLFTPNMKVVDLGAAPGGWSQVASKLIKASDNNLNNKIISIDVLEIEHVAGVEFVQKDFFEADTEELIIQALDGRADIVMSDMASNTIGHKATDHIRTLLLCEQAFEFALKVLKPSGHFIAKIFRGGAENELLHKVKREFKTVKHFKPSSSRSESTEIYLVALNKK</sequence>
<feature type="chain" id="PRO_1000087708" description="Ribosomal RNA large subunit methyltransferase E">
    <location>
        <begin position="1"/>
        <end position="227"/>
    </location>
</feature>
<feature type="active site" description="Proton acceptor" evidence="1">
    <location>
        <position position="183"/>
    </location>
</feature>
<feature type="binding site" evidence="1">
    <location>
        <position position="78"/>
    </location>
    <ligand>
        <name>S-adenosyl-L-methionine</name>
        <dbReference type="ChEBI" id="CHEBI:59789"/>
    </ligand>
</feature>
<feature type="binding site" evidence="1">
    <location>
        <position position="80"/>
    </location>
    <ligand>
        <name>S-adenosyl-L-methionine</name>
        <dbReference type="ChEBI" id="CHEBI:59789"/>
    </ligand>
</feature>
<feature type="binding site" evidence="1">
    <location>
        <position position="103"/>
    </location>
    <ligand>
        <name>S-adenosyl-L-methionine</name>
        <dbReference type="ChEBI" id="CHEBI:59789"/>
    </ligand>
</feature>
<feature type="binding site" evidence="1">
    <location>
        <position position="119"/>
    </location>
    <ligand>
        <name>S-adenosyl-L-methionine</name>
        <dbReference type="ChEBI" id="CHEBI:59789"/>
    </ligand>
</feature>
<feature type="binding site" evidence="1">
    <location>
        <position position="143"/>
    </location>
    <ligand>
        <name>S-adenosyl-L-methionine</name>
        <dbReference type="ChEBI" id="CHEBI:59789"/>
    </ligand>
</feature>
<dbReference type="EC" id="2.1.1.166" evidence="1"/>
<dbReference type="EMBL" id="CP000848">
    <property type="protein sequence ID" value="ABV75815.1"/>
    <property type="molecule type" value="Genomic_DNA"/>
</dbReference>
<dbReference type="RefSeq" id="WP_012150421.1">
    <property type="nucleotide sequence ID" value="NZ_CP121767.1"/>
</dbReference>
<dbReference type="SMR" id="A8GQZ0"/>
<dbReference type="GeneID" id="79936999"/>
<dbReference type="KEGG" id="rri:A1G_01165"/>
<dbReference type="HOGENOM" id="CLU_009422_4_0_5"/>
<dbReference type="Proteomes" id="UP000006832">
    <property type="component" value="Chromosome"/>
</dbReference>
<dbReference type="GO" id="GO:0005737">
    <property type="term" value="C:cytoplasm"/>
    <property type="evidence" value="ECO:0007669"/>
    <property type="project" value="UniProtKB-SubCell"/>
</dbReference>
<dbReference type="GO" id="GO:0008650">
    <property type="term" value="F:rRNA (uridine-2'-O-)-methyltransferase activity"/>
    <property type="evidence" value="ECO:0007669"/>
    <property type="project" value="UniProtKB-UniRule"/>
</dbReference>
<dbReference type="FunFam" id="3.40.50.150:FF:000354">
    <property type="entry name" value="Ribosomal RNA large subunit methyltransferase E"/>
    <property type="match status" value="1"/>
</dbReference>
<dbReference type="Gene3D" id="3.40.50.150">
    <property type="entry name" value="Vaccinia Virus protein VP39"/>
    <property type="match status" value="1"/>
</dbReference>
<dbReference type="HAMAP" id="MF_01547">
    <property type="entry name" value="RNA_methyltr_E"/>
    <property type="match status" value="1"/>
</dbReference>
<dbReference type="InterPro" id="IPR050082">
    <property type="entry name" value="RNA_methyltr_RlmE"/>
</dbReference>
<dbReference type="InterPro" id="IPR002877">
    <property type="entry name" value="RNA_MeTrfase_FtsJ_dom"/>
</dbReference>
<dbReference type="InterPro" id="IPR015507">
    <property type="entry name" value="rRNA-MeTfrase_E"/>
</dbReference>
<dbReference type="InterPro" id="IPR029063">
    <property type="entry name" value="SAM-dependent_MTases_sf"/>
</dbReference>
<dbReference type="PANTHER" id="PTHR10920">
    <property type="entry name" value="RIBOSOMAL RNA METHYLTRANSFERASE"/>
    <property type="match status" value="1"/>
</dbReference>
<dbReference type="PANTHER" id="PTHR10920:SF18">
    <property type="entry name" value="RRNA METHYLTRANSFERASE 2, MITOCHONDRIAL"/>
    <property type="match status" value="1"/>
</dbReference>
<dbReference type="Pfam" id="PF01728">
    <property type="entry name" value="FtsJ"/>
    <property type="match status" value="1"/>
</dbReference>
<dbReference type="PIRSF" id="PIRSF005461">
    <property type="entry name" value="23S_rRNA_mtase"/>
    <property type="match status" value="1"/>
</dbReference>
<dbReference type="SUPFAM" id="SSF53335">
    <property type="entry name" value="S-adenosyl-L-methionine-dependent methyltransferases"/>
    <property type="match status" value="1"/>
</dbReference>
<keyword id="KW-0963">Cytoplasm</keyword>
<keyword id="KW-0489">Methyltransferase</keyword>
<keyword id="KW-0698">rRNA processing</keyword>
<keyword id="KW-0949">S-adenosyl-L-methionine</keyword>
<keyword id="KW-0808">Transferase</keyword>
<name>RLME_RICRS</name>
<proteinExistence type="inferred from homology"/>
<gene>
    <name evidence="1" type="primary">rlmE</name>
    <name evidence="1" type="synonym">ftsJ</name>
    <name evidence="1" type="synonym">rrmJ</name>
    <name type="ordered locus">A1G_01165</name>
</gene>